<evidence type="ECO:0000255" key="1">
    <source>
        <dbReference type="HAMAP-Rule" id="MF_03056"/>
    </source>
</evidence>
<evidence type="ECO:0000256" key="2">
    <source>
        <dbReference type="SAM" id="MobiDB-lite"/>
    </source>
</evidence>
<keyword id="KW-0539">Nucleus</keyword>
<keyword id="KW-0677">Repeat</keyword>
<keyword id="KW-0819">tRNA processing</keyword>
<keyword id="KW-0853">WD repeat</keyword>
<proteinExistence type="inferred from homology"/>
<comment type="function">
    <text evidence="1">Required for the formation of N(7)-methylguanine at position 46 (m7G46) in tRNA. In the complex, it is required to stabilize and induce conformational changes of the catalytic subunit.</text>
</comment>
<comment type="pathway">
    <text evidence="1">tRNA modification; N(7)-methylguanine-tRNA biosynthesis.</text>
</comment>
<comment type="subunit">
    <text evidence="1">Forms a heterodimer with the catalytic subunit TRM8.</text>
</comment>
<comment type="subcellular location">
    <subcellularLocation>
        <location evidence="1">Nucleus</location>
    </subcellularLocation>
</comment>
<comment type="similarity">
    <text evidence="1">Belongs to the WD repeat TRM82 family.</text>
</comment>
<gene>
    <name evidence="1" type="primary">TRM82</name>
    <name type="ordered locus">CNBG2390</name>
</gene>
<dbReference type="EMBL" id="AAEY01000038">
    <property type="protein sequence ID" value="EAL19611.1"/>
    <property type="molecule type" value="Genomic_DNA"/>
</dbReference>
<dbReference type="RefSeq" id="XP_774258.1">
    <property type="nucleotide sequence ID" value="XM_769165.1"/>
</dbReference>
<dbReference type="SMR" id="P0CS53"/>
<dbReference type="GeneID" id="4937273"/>
<dbReference type="KEGG" id="cnb:CNBG2390"/>
<dbReference type="VEuPathDB" id="FungiDB:CNBG2390"/>
<dbReference type="HOGENOM" id="CLU_023695_0_0_1"/>
<dbReference type="OrthoDB" id="8046at5206"/>
<dbReference type="UniPathway" id="UPA00989"/>
<dbReference type="GO" id="GO:0005829">
    <property type="term" value="C:cytosol"/>
    <property type="evidence" value="ECO:0007669"/>
    <property type="project" value="TreeGrafter"/>
</dbReference>
<dbReference type="GO" id="GO:0005634">
    <property type="term" value="C:nucleus"/>
    <property type="evidence" value="ECO:0007669"/>
    <property type="project" value="UniProtKB-SubCell"/>
</dbReference>
<dbReference type="GO" id="GO:0043527">
    <property type="term" value="C:tRNA methyltransferase complex"/>
    <property type="evidence" value="ECO:0007669"/>
    <property type="project" value="TreeGrafter"/>
</dbReference>
<dbReference type="GO" id="GO:0106004">
    <property type="term" value="P:tRNA (guanine-N7)-methylation"/>
    <property type="evidence" value="ECO:0007669"/>
    <property type="project" value="UniProtKB-UniRule"/>
</dbReference>
<dbReference type="Gene3D" id="2.130.10.10">
    <property type="entry name" value="YVTN repeat-like/Quinoprotein amine dehydrogenase"/>
    <property type="match status" value="2"/>
</dbReference>
<dbReference type="HAMAP" id="MF_03056">
    <property type="entry name" value="TRM82"/>
    <property type="match status" value="1"/>
</dbReference>
<dbReference type="InterPro" id="IPR028884">
    <property type="entry name" value="Trm82"/>
</dbReference>
<dbReference type="InterPro" id="IPR015943">
    <property type="entry name" value="WD40/YVTN_repeat-like_dom_sf"/>
</dbReference>
<dbReference type="InterPro" id="IPR019775">
    <property type="entry name" value="WD40_repeat_CS"/>
</dbReference>
<dbReference type="InterPro" id="IPR036322">
    <property type="entry name" value="WD40_repeat_dom_sf"/>
</dbReference>
<dbReference type="InterPro" id="IPR001680">
    <property type="entry name" value="WD40_rpt"/>
</dbReference>
<dbReference type="PANTHER" id="PTHR16288:SF0">
    <property type="entry name" value="TRNA (GUANINE-N(7)-)-METHYLTRANSFERASE NON-CATALYTIC SUBUNIT WDR4"/>
    <property type="match status" value="1"/>
</dbReference>
<dbReference type="PANTHER" id="PTHR16288">
    <property type="entry name" value="WD40 REPEAT PROTEIN 4"/>
    <property type="match status" value="1"/>
</dbReference>
<dbReference type="Pfam" id="PF00400">
    <property type="entry name" value="WD40"/>
    <property type="match status" value="1"/>
</dbReference>
<dbReference type="SMART" id="SM00320">
    <property type="entry name" value="WD40"/>
    <property type="match status" value="3"/>
</dbReference>
<dbReference type="SUPFAM" id="SSF50978">
    <property type="entry name" value="WD40 repeat-like"/>
    <property type="match status" value="1"/>
</dbReference>
<dbReference type="PROSITE" id="PS00678">
    <property type="entry name" value="WD_REPEATS_1"/>
    <property type="match status" value="1"/>
</dbReference>
<dbReference type="PROSITE" id="PS50082">
    <property type="entry name" value="WD_REPEATS_2"/>
    <property type="match status" value="1"/>
</dbReference>
<dbReference type="PROSITE" id="PS50294">
    <property type="entry name" value="WD_REPEATS_REGION"/>
    <property type="match status" value="1"/>
</dbReference>
<name>TRM82_CRYNB</name>
<reference key="1">
    <citation type="journal article" date="2005" name="Science">
        <title>The genome of the basidiomycetous yeast and human pathogen Cryptococcus neoformans.</title>
        <authorList>
            <person name="Loftus B.J."/>
            <person name="Fung E."/>
            <person name="Roncaglia P."/>
            <person name="Rowley D."/>
            <person name="Amedeo P."/>
            <person name="Bruno D."/>
            <person name="Vamathevan J."/>
            <person name="Miranda M."/>
            <person name="Anderson I.J."/>
            <person name="Fraser J.A."/>
            <person name="Allen J.E."/>
            <person name="Bosdet I.E."/>
            <person name="Brent M.R."/>
            <person name="Chiu R."/>
            <person name="Doering T.L."/>
            <person name="Donlin M.J."/>
            <person name="D'Souza C.A."/>
            <person name="Fox D.S."/>
            <person name="Grinberg V."/>
            <person name="Fu J."/>
            <person name="Fukushima M."/>
            <person name="Haas B.J."/>
            <person name="Huang J.C."/>
            <person name="Janbon G."/>
            <person name="Jones S.J.M."/>
            <person name="Koo H.L."/>
            <person name="Krzywinski M.I."/>
            <person name="Kwon-Chung K.J."/>
            <person name="Lengeler K.B."/>
            <person name="Maiti R."/>
            <person name="Marra M.A."/>
            <person name="Marra R.E."/>
            <person name="Mathewson C.A."/>
            <person name="Mitchell T.G."/>
            <person name="Pertea M."/>
            <person name="Riggs F.R."/>
            <person name="Salzberg S.L."/>
            <person name="Schein J.E."/>
            <person name="Shvartsbeyn A."/>
            <person name="Shin H."/>
            <person name="Shumway M."/>
            <person name="Specht C.A."/>
            <person name="Suh B.B."/>
            <person name="Tenney A."/>
            <person name="Utterback T.R."/>
            <person name="Wickes B.L."/>
            <person name="Wortman J.R."/>
            <person name="Wye N.H."/>
            <person name="Kronstad J.W."/>
            <person name="Lodge J.K."/>
            <person name="Heitman J."/>
            <person name="Davis R.W."/>
            <person name="Fraser C.M."/>
            <person name="Hyman R.W."/>
        </authorList>
    </citation>
    <scope>NUCLEOTIDE SEQUENCE [LARGE SCALE GENOMIC DNA]</scope>
    <source>
        <strain>B-3501A</strain>
    </source>
</reference>
<organism>
    <name type="scientific">Cryptococcus neoformans var. neoformans serotype D (strain B-3501A)</name>
    <name type="common">Filobasidiella neoformans</name>
    <dbReference type="NCBI Taxonomy" id="283643"/>
    <lineage>
        <taxon>Eukaryota</taxon>
        <taxon>Fungi</taxon>
        <taxon>Dikarya</taxon>
        <taxon>Basidiomycota</taxon>
        <taxon>Agaricomycotina</taxon>
        <taxon>Tremellomycetes</taxon>
        <taxon>Tremellales</taxon>
        <taxon>Cryptococcaceae</taxon>
        <taxon>Cryptococcus</taxon>
        <taxon>Cryptococcus neoformans species complex</taxon>
    </lineage>
</organism>
<feature type="chain" id="PRO_0000410339" description="tRNA (guanine-N(7)-)-methyltransferase non-catalytic subunit TRM82">
    <location>
        <begin position="1"/>
        <end position="569"/>
    </location>
</feature>
<feature type="repeat" description="WD 1">
    <location>
        <begin position="42"/>
        <end position="81"/>
    </location>
</feature>
<feature type="repeat" description="WD 2">
    <location>
        <begin position="147"/>
        <end position="188"/>
    </location>
</feature>
<feature type="repeat" description="WD 3">
    <location>
        <begin position="190"/>
        <end position="230"/>
    </location>
</feature>
<feature type="region of interest" description="Disordered" evidence="2">
    <location>
        <begin position="522"/>
        <end position="569"/>
    </location>
</feature>
<feature type="compositionally biased region" description="Basic and acidic residues" evidence="2">
    <location>
        <begin position="538"/>
        <end position="551"/>
    </location>
</feature>
<sequence length="569" mass="61672">MALHCPPTALATSSTSLFIAAGPALHVFNPSTSTFASCPADGTGGLIRLLAVREDGEVAATLGEDKQLAVWDIQHDRPQLRHTRTVVKKGSCLSFAKDGSIILTDKVGDVYSYPLDPVPIDPSAERPPMYTLVADPSQNPDATYLLGHVSMLNAHVMTPDGRRIITADRDEHIRVSRYPKAYVIDKYLFGHDGFVSALHIPPSNPSLLLSAGGDPSLLIWNPSTGKLLTSVPVWPAVLSHRRVRSHLRRHKPGSRKLKMDPVPEDMDEENQTFYTAPEGYMLPSGQGVCIKKIESVKIGGETVVLFFSEGASAIHSFILPTDPEGVKPTVHTLPLPHPLIDFTPIPSTSSADEKEVLLSLDTAWDVLKKNPGPGIEGRQDTIQRDDLSDEEKRNISKIFSVARISADGHLSLGDASVYDSLVSNLPSTDIKTLSNVNLYPLLCVLPRWPGFEEGDEELTVNTGTPDTPGTPGPADAVSLAPTSGAFLQKSYTQEELEKMNTKQLGRLKSAGIDVGSILLARQKKAKEEHKARKAAAKAKAEAQKNQKEGGRPAKKKKKVEMSEEELANA</sequence>
<protein>
    <recommendedName>
        <fullName evidence="1">tRNA (guanine-N(7)-)-methyltransferase non-catalytic subunit TRM82</fullName>
    </recommendedName>
    <alternativeName>
        <fullName evidence="1">Transfer RNA methyltransferase 82</fullName>
    </alternativeName>
</protein>
<accession>P0CS53</accession>
<accession>Q55PH3</accession>
<accession>Q5KDY5</accession>